<evidence type="ECO:0000250" key="1"/>
<evidence type="ECO:0000269" key="2">
    <source>
    </source>
</evidence>
<evidence type="ECO:0000269" key="3">
    <source>
    </source>
</evidence>
<evidence type="ECO:0007829" key="4">
    <source>
        <dbReference type="PDB" id="2LDS"/>
    </source>
</evidence>
<name>LAIT1_LIOAU</name>
<organism>
    <name type="scientific">Liocheles australasiae</name>
    <name type="common">Dwarf wood scorpion</name>
    <dbReference type="NCBI Taxonomy" id="431266"/>
    <lineage>
        <taxon>Eukaryota</taxon>
        <taxon>Metazoa</taxon>
        <taxon>Ecdysozoa</taxon>
        <taxon>Arthropoda</taxon>
        <taxon>Chelicerata</taxon>
        <taxon>Arachnida</taxon>
        <taxon>Scorpiones</taxon>
        <taxon>Iurida</taxon>
        <taxon>Scorpionoidea</taxon>
        <taxon>Hemiscorpiidae</taxon>
        <taxon>Liocheles</taxon>
    </lineage>
</organism>
<proteinExistence type="evidence at protein level"/>
<accession>P0C5F2</accession>
<sequence>DFPLSKEYETCVRPRKCQPPLKCNKAQICVDPKKGW</sequence>
<protein>
    <recommendedName>
        <fullName>Insecticidal toxin LaIT1</fullName>
    </recommendedName>
</protein>
<reference key="1">
    <citation type="journal article" date="2007" name="Toxicon">
        <title>Purification and characterization of a novel short-chain insecticidal toxin with two disulfide bridges from the venom of the scorpion Liocheles australasiae.</title>
        <authorList>
            <person name="Matsushita N."/>
            <person name="Miyashita M."/>
            <person name="Sakai A."/>
            <person name="Nakagawa Y."/>
            <person name="Miyagawa H."/>
        </authorList>
    </citation>
    <scope>PROTEIN SEQUENCE</scope>
    <scope>FUNCTION</scope>
    <scope>BIOASSAY</scope>
    <scope>TOXIC DOSE</scope>
    <scope>MASS SPECTROMETRY</scope>
    <scope>DISULFIDE BONDS</scope>
    <source>
        <tissue>Venom</tissue>
    </source>
</reference>
<reference key="2">
    <citation type="journal article" date="2011" name="Biochem. Biophys. Res. Commun.">
        <title>Solution structure of a short-chain insecticidal toxin LaIT1 from the venom of scorpion Liocheles australasiae.</title>
        <authorList>
            <person name="Horita S."/>
            <person name="Matsushita N."/>
            <person name="Kawachi T."/>
            <person name="Ayabe R."/>
            <person name="Miyashita M."/>
            <person name="Miyakawa T."/>
            <person name="Nakagawa Y."/>
            <person name="Nagata K."/>
            <person name="Miyagawa H."/>
            <person name="Tanokura M."/>
        </authorList>
    </citation>
    <scope>STRUCTURE BY NMR</scope>
    <scope>DISULFIDE BONDS</scope>
    <scope>FUNCTION</scope>
    <scope>BIOASSAY</scope>
    <scope>SYNTHESIS</scope>
    <scope>MUTAGENESIS OF ARG-13; ARG-15 AND LYS-16</scope>
</reference>
<dbReference type="PDB" id="2LDS">
    <property type="method" value="NMR"/>
    <property type="chains" value="A=1-36"/>
</dbReference>
<dbReference type="PDBsum" id="2LDS"/>
<dbReference type="BMRB" id="P0C5F2"/>
<dbReference type="SMR" id="P0C5F2"/>
<dbReference type="EvolutionaryTrace" id="P0C5F2"/>
<dbReference type="GO" id="GO:0005576">
    <property type="term" value="C:extracellular region"/>
    <property type="evidence" value="ECO:0007669"/>
    <property type="project" value="UniProtKB-SubCell"/>
</dbReference>
<dbReference type="GO" id="GO:0005246">
    <property type="term" value="F:calcium channel regulator activity"/>
    <property type="evidence" value="ECO:0007669"/>
    <property type="project" value="UniProtKB-KW"/>
</dbReference>
<dbReference type="GO" id="GO:0090729">
    <property type="term" value="F:toxin activity"/>
    <property type="evidence" value="ECO:0007669"/>
    <property type="project" value="UniProtKB-KW"/>
</dbReference>
<comment type="function">
    <text evidence="1 2 3">Affects the activity of both ryanodine-sensitive calcium-release channels RyR1 and RyR2 with high potency. At lower concentrations the toxin increases full openings of the RyRs, and at higher concentrations it inhibits full openings and induce openings to subconductance levels and reduces the number of full conductance openings. The different actions may be attributed to the toxins binding at different sites on the RyRs, with binding at a high-affinity site mediating the increase in full openings and the induction of subconductance states evoked upon binding to a lower-affinity site (By similarity). Shows insect lethality against crickets and common cutworms (only shows paralysis against cockroaches), but no toxicity is observed in mice.</text>
</comment>
<comment type="subcellular location">
    <subcellularLocation>
        <location>Secreted</location>
    </subcellularLocation>
</comment>
<comment type="tissue specificity">
    <text>Expressed by the venom gland.</text>
</comment>
<comment type="mass spectrometry"/>
<comment type="toxic dose">
    <text evidence="2">LD(50) is 22 mg/kg when injected into crickets (Orthoptera) and LD(50) is 52 mg/kg when injected into common cutworms (Lepidoptera). PD(50) (irreversible paralysis) is 120 mg/kg when injected into cockroaches (observed 48 hours post-injection).</text>
</comment>
<comment type="miscellaneous">
    <text evidence="1">This toxin may reach its physiological target by traversing membranes, which may be by slow permeation. Alternatively, scorpion venoms are known to contain amphipathic helical peptides that form pores in the cell membrane, and it is possible that these pores would allow this toxin to enter the cell (By similarity).</text>
</comment>
<keyword id="KW-0002">3D-structure</keyword>
<keyword id="KW-0108">Calcium channel impairing toxin</keyword>
<keyword id="KW-0903">Direct protein sequencing</keyword>
<keyword id="KW-1015">Disulfide bond</keyword>
<keyword id="KW-0872">Ion channel impairing toxin</keyword>
<keyword id="KW-1219">Ryanodine-sensitive calcium-release channel impairing toxin</keyword>
<keyword id="KW-0964">Secreted</keyword>
<keyword id="KW-0800">Toxin</keyword>
<feature type="chain" id="PRO_0000305106" description="Insecticidal toxin LaIT1">
    <location>
        <begin position="1"/>
        <end position="36"/>
    </location>
</feature>
<feature type="disulfide bond">
    <location>
        <begin position="11"/>
        <end position="23"/>
    </location>
</feature>
<feature type="disulfide bond">
    <location>
        <begin position="17"/>
        <end position="29"/>
    </location>
</feature>
<feature type="mutagenesis site" description="4.2-fold reduction in insecticidal activity." evidence="3">
    <original>R</original>
    <variation>A</variation>
    <location>
        <position position="13"/>
    </location>
</feature>
<feature type="mutagenesis site" description="12-fold reduction in insecticidal activity." evidence="3">
    <original>R</original>
    <variation>A</variation>
    <location>
        <position position="15"/>
    </location>
</feature>
<feature type="mutagenesis site" description="No effect in insecticidal activity." evidence="3">
    <original>K</original>
    <variation>A</variation>
    <location>
        <position position="16"/>
    </location>
</feature>
<feature type="strand" evidence="4">
    <location>
        <begin position="6"/>
        <end position="9"/>
    </location>
</feature>
<feature type="strand" evidence="4">
    <location>
        <begin position="18"/>
        <end position="20"/>
    </location>
</feature>
<feature type="strand" evidence="4">
    <location>
        <begin position="25"/>
        <end position="27"/>
    </location>
</feature>